<proteinExistence type="evidence at protein level"/>
<reference key="1">
    <citation type="journal article" date="2000" name="Nature">
        <title>Sequence and analysis of chromosome 3 of the plant Arabidopsis thaliana.</title>
        <authorList>
            <person name="Salanoubat M."/>
            <person name="Lemcke K."/>
            <person name="Rieger M."/>
            <person name="Ansorge W."/>
            <person name="Unseld M."/>
            <person name="Fartmann B."/>
            <person name="Valle G."/>
            <person name="Bloecker H."/>
            <person name="Perez-Alonso M."/>
            <person name="Obermaier B."/>
            <person name="Delseny M."/>
            <person name="Boutry M."/>
            <person name="Grivell L.A."/>
            <person name="Mache R."/>
            <person name="Puigdomenech P."/>
            <person name="De Simone V."/>
            <person name="Choisne N."/>
            <person name="Artiguenave F."/>
            <person name="Robert C."/>
            <person name="Brottier P."/>
            <person name="Wincker P."/>
            <person name="Cattolico L."/>
            <person name="Weissenbach J."/>
            <person name="Saurin W."/>
            <person name="Quetier F."/>
            <person name="Schaefer M."/>
            <person name="Mueller-Auer S."/>
            <person name="Gabel C."/>
            <person name="Fuchs M."/>
            <person name="Benes V."/>
            <person name="Wurmbach E."/>
            <person name="Drzonek H."/>
            <person name="Erfle H."/>
            <person name="Jordan N."/>
            <person name="Bangert S."/>
            <person name="Wiedelmann R."/>
            <person name="Kranz H."/>
            <person name="Voss H."/>
            <person name="Holland R."/>
            <person name="Brandt P."/>
            <person name="Nyakatura G."/>
            <person name="Vezzi A."/>
            <person name="D'Angelo M."/>
            <person name="Pallavicini A."/>
            <person name="Toppo S."/>
            <person name="Simionati B."/>
            <person name="Conrad A."/>
            <person name="Hornischer K."/>
            <person name="Kauer G."/>
            <person name="Loehnert T.-H."/>
            <person name="Nordsiek G."/>
            <person name="Reichelt J."/>
            <person name="Scharfe M."/>
            <person name="Schoen O."/>
            <person name="Bargues M."/>
            <person name="Terol J."/>
            <person name="Climent J."/>
            <person name="Navarro P."/>
            <person name="Collado C."/>
            <person name="Perez-Perez A."/>
            <person name="Ottenwaelder B."/>
            <person name="Duchemin D."/>
            <person name="Cooke R."/>
            <person name="Laudie M."/>
            <person name="Berger-Llauro C."/>
            <person name="Purnelle B."/>
            <person name="Masuy D."/>
            <person name="de Haan M."/>
            <person name="Maarse A.C."/>
            <person name="Alcaraz J.-P."/>
            <person name="Cottet A."/>
            <person name="Casacuberta E."/>
            <person name="Monfort A."/>
            <person name="Argiriou A."/>
            <person name="Flores M."/>
            <person name="Liguori R."/>
            <person name="Vitale D."/>
            <person name="Mannhaupt G."/>
            <person name="Haase D."/>
            <person name="Schoof H."/>
            <person name="Rudd S."/>
            <person name="Zaccaria P."/>
            <person name="Mewes H.-W."/>
            <person name="Mayer K.F.X."/>
            <person name="Kaul S."/>
            <person name="Town C.D."/>
            <person name="Koo H.L."/>
            <person name="Tallon L.J."/>
            <person name="Jenkins J."/>
            <person name="Rooney T."/>
            <person name="Rizzo M."/>
            <person name="Walts A."/>
            <person name="Utterback T."/>
            <person name="Fujii C.Y."/>
            <person name="Shea T.P."/>
            <person name="Creasy T.H."/>
            <person name="Haas B."/>
            <person name="Maiti R."/>
            <person name="Wu D."/>
            <person name="Peterson J."/>
            <person name="Van Aken S."/>
            <person name="Pai G."/>
            <person name="Militscher J."/>
            <person name="Sellers P."/>
            <person name="Gill J.E."/>
            <person name="Feldblyum T.V."/>
            <person name="Preuss D."/>
            <person name="Lin X."/>
            <person name="Nierman W.C."/>
            <person name="Salzberg S.L."/>
            <person name="White O."/>
            <person name="Venter J.C."/>
            <person name="Fraser C.M."/>
            <person name="Kaneko T."/>
            <person name="Nakamura Y."/>
            <person name="Sato S."/>
            <person name="Kato T."/>
            <person name="Asamizu E."/>
            <person name="Sasamoto S."/>
            <person name="Kimura T."/>
            <person name="Idesawa K."/>
            <person name="Kawashima K."/>
            <person name="Kishida Y."/>
            <person name="Kiyokawa C."/>
            <person name="Kohara M."/>
            <person name="Matsumoto M."/>
            <person name="Matsuno A."/>
            <person name="Muraki A."/>
            <person name="Nakayama S."/>
            <person name="Nakazaki N."/>
            <person name="Shinpo S."/>
            <person name="Takeuchi C."/>
            <person name="Wada T."/>
            <person name="Watanabe A."/>
            <person name="Yamada M."/>
            <person name="Yasuda M."/>
            <person name="Tabata S."/>
        </authorList>
    </citation>
    <scope>NUCLEOTIDE SEQUENCE [LARGE SCALE GENOMIC DNA]</scope>
    <source>
        <strain>cv. Columbia</strain>
    </source>
</reference>
<reference key="2">
    <citation type="journal article" date="2017" name="Plant J.">
        <title>Araport11: a complete reannotation of the Arabidopsis thaliana reference genome.</title>
        <authorList>
            <person name="Cheng C.Y."/>
            <person name="Krishnakumar V."/>
            <person name="Chan A.P."/>
            <person name="Thibaud-Nissen F."/>
            <person name="Schobel S."/>
            <person name="Town C.D."/>
        </authorList>
    </citation>
    <scope>GENOME REANNOTATION</scope>
    <source>
        <strain>cv. Columbia</strain>
    </source>
</reference>
<reference key="3">
    <citation type="submission" date="2006-07" db="EMBL/GenBank/DDBJ databases">
        <title>Large-scale analysis of RIKEN Arabidopsis full-length (RAFL) cDNAs.</title>
        <authorList>
            <person name="Totoki Y."/>
            <person name="Seki M."/>
            <person name="Ishida J."/>
            <person name="Nakajima M."/>
            <person name="Enju A."/>
            <person name="Kamiya A."/>
            <person name="Narusaka M."/>
            <person name="Shin-i T."/>
            <person name="Nakagawa M."/>
            <person name="Sakamoto N."/>
            <person name="Oishi K."/>
            <person name="Kohara Y."/>
            <person name="Kobayashi M."/>
            <person name="Toyoda A."/>
            <person name="Sakaki Y."/>
            <person name="Sakurai T."/>
            <person name="Iida K."/>
            <person name="Akiyama K."/>
            <person name="Satou M."/>
            <person name="Toyoda T."/>
            <person name="Konagaya A."/>
            <person name="Carninci P."/>
            <person name="Kawai J."/>
            <person name="Hayashizaki Y."/>
            <person name="Shinozaki K."/>
        </authorList>
    </citation>
    <scope>NUCLEOTIDE SEQUENCE [LARGE SCALE MRNA]</scope>
    <source>
        <strain>cv. Columbia</strain>
    </source>
</reference>
<reference key="4">
    <citation type="journal article" date="2009" name="DNA Res.">
        <title>Analysis of multiple occurrences of alternative splicing events in Arabidopsis thaliana using novel sequenced full-length cDNAs.</title>
        <authorList>
            <person name="Iida K."/>
            <person name="Fukami-Kobayashi K."/>
            <person name="Toyoda A."/>
            <person name="Sakaki Y."/>
            <person name="Kobayashi M."/>
            <person name="Seki M."/>
            <person name="Shinozaki K."/>
        </authorList>
    </citation>
    <scope>NUCLEOTIDE SEQUENCE [LARGE SCALE MRNA]</scope>
    <source>
        <strain>cv. Columbia</strain>
    </source>
</reference>
<reference key="5">
    <citation type="submission" date="2002-03" db="EMBL/GenBank/DDBJ databases">
        <title>Full-length cDNA from Arabidopsis thaliana.</title>
        <authorList>
            <person name="Brover V.V."/>
            <person name="Troukhan M.E."/>
            <person name="Alexandrov N.A."/>
            <person name="Lu Y.-P."/>
            <person name="Flavell R.B."/>
            <person name="Feldmann K.A."/>
        </authorList>
    </citation>
    <scope>NUCLEOTIDE SEQUENCE [LARGE SCALE MRNA]</scope>
</reference>
<reference key="6">
    <citation type="journal article" date="2001" name="Trends Plant Sci.">
        <title>The U-box protein family in plants.</title>
        <authorList>
            <person name="Azevedo C."/>
            <person name="Santos-Rosa M.J."/>
            <person name="Shirasu K."/>
        </authorList>
    </citation>
    <scope>GENE FAMILY ORGANIZATION</scope>
    <scope>NOMENCLATURE</scope>
</reference>
<reference key="7">
    <citation type="journal article" date="2004" name="Plant Physiol.">
        <title>A large complement of the predicted Arabidopsis ARM repeat proteins are members of the U-box E3 ubiquitin ligase family.</title>
        <authorList>
            <person name="Mudgil Y."/>
            <person name="Shiu S.-H."/>
            <person name="Stone S.L."/>
            <person name="Salt J.N."/>
            <person name="Goring D.R."/>
        </authorList>
    </citation>
    <scope>GENE FAMILY ORGANIZATION</scope>
</reference>
<reference key="8">
    <citation type="journal article" date="2008" name="Curr. Biol.">
        <title>Negative regulation of PAMP-triggered immunity by an E3 ubiquitin ligase triplet in Arabidopsis.</title>
        <authorList>
            <person name="Trujillo M."/>
            <person name="Ichimura K."/>
            <person name="Casais C."/>
            <person name="Shirasu K."/>
        </authorList>
    </citation>
    <scope>FUNCTION</scope>
    <scope>INDUCTION</scope>
    <scope>AUTOUBIQUITINATION</scope>
    <scope>MUTAGENESIS OF CYS-16 AND TRP-43</scope>
</reference>
<accession>Q9SF15</accession>
<accession>B9DGA6</accession>
<accession>F4J7H3</accession>
<protein>
    <recommendedName>
        <fullName>E3 ubiquitin-protein ligase PUB24</fullName>
        <ecNumber>2.3.2.27</ecNumber>
    </recommendedName>
    <alternativeName>
        <fullName>Plant U-box protein 24</fullName>
    </alternativeName>
    <alternativeName>
        <fullName evidence="2">RING-type E3 ubiquitin transferase PUB24</fullName>
    </alternativeName>
    <alternativeName>
        <fullName>U-box domain-containing protein 24</fullName>
    </alternativeName>
</protein>
<dbReference type="EC" id="2.3.2.27"/>
<dbReference type="EMBL" id="AC016795">
    <property type="protein sequence ID" value="AAF23200.1"/>
    <property type="molecule type" value="Genomic_DNA"/>
</dbReference>
<dbReference type="EMBL" id="CP002686">
    <property type="protein sequence ID" value="AEE75107.2"/>
    <property type="molecule type" value="Genomic_DNA"/>
</dbReference>
<dbReference type="EMBL" id="AK228955">
    <property type="protein sequence ID" value="BAF00844.1"/>
    <property type="molecule type" value="mRNA"/>
</dbReference>
<dbReference type="EMBL" id="AK317081">
    <property type="protein sequence ID" value="BAH19773.1"/>
    <property type="status" value="ALT_INIT"/>
    <property type="molecule type" value="mRNA"/>
</dbReference>
<dbReference type="EMBL" id="AY084238">
    <property type="protein sequence ID" value="AAM67265.1"/>
    <property type="molecule type" value="mRNA"/>
</dbReference>
<dbReference type="RefSeq" id="NP_566402.2">
    <property type="nucleotide sequence ID" value="NM_112017.4"/>
</dbReference>
<dbReference type="SMR" id="Q9SF15"/>
<dbReference type="FunCoup" id="Q9SF15">
    <property type="interactions" value="26"/>
</dbReference>
<dbReference type="STRING" id="3702.Q9SF15"/>
<dbReference type="PaxDb" id="3702-AT3G11840.1"/>
<dbReference type="ProteomicsDB" id="226253"/>
<dbReference type="EnsemblPlants" id="AT3G11840.1">
    <property type="protein sequence ID" value="AT3G11840.1"/>
    <property type="gene ID" value="AT3G11840"/>
</dbReference>
<dbReference type="GeneID" id="820357"/>
<dbReference type="Gramene" id="AT3G11840.1">
    <property type="protein sequence ID" value="AT3G11840.1"/>
    <property type="gene ID" value="AT3G11840"/>
</dbReference>
<dbReference type="KEGG" id="ath:AT3G11840"/>
<dbReference type="Araport" id="AT3G11840"/>
<dbReference type="TAIR" id="AT3G11840">
    <property type="gene designation" value="PUB24"/>
</dbReference>
<dbReference type="eggNOG" id="ENOG502SC8Q">
    <property type="taxonomic scope" value="Eukaryota"/>
</dbReference>
<dbReference type="HOGENOM" id="CLU_006348_1_0_1"/>
<dbReference type="InParanoid" id="Q9SF15"/>
<dbReference type="OMA" id="RRLMCEE"/>
<dbReference type="OrthoDB" id="10064100at2759"/>
<dbReference type="PhylomeDB" id="Q9SF15"/>
<dbReference type="UniPathway" id="UPA00143"/>
<dbReference type="PRO" id="PR:Q9SF15"/>
<dbReference type="Proteomes" id="UP000006548">
    <property type="component" value="Chromosome 3"/>
</dbReference>
<dbReference type="ExpressionAtlas" id="Q9SF15">
    <property type="expression patterns" value="baseline and differential"/>
</dbReference>
<dbReference type="GO" id="GO:0061630">
    <property type="term" value="F:ubiquitin protein ligase activity"/>
    <property type="evidence" value="ECO:0007669"/>
    <property type="project" value="InterPro"/>
</dbReference>
<dbReference type="GO" id="GO:0004842">
    <property type="term" value="F:ubiquitin-protein transferase activity"/>
    <property type="evidence" value="ECO:0000314"/>
    <property type="project" value="UniProtKB"/>
</dbReference>
<dbReference type="GO" id="GO:0006952">
    <property type="term" value="P:defense response"/>
    <property type="evidence" value="ECO:0007669"/>
    <property type="project" value="UniProtKB-KW"/>
</dbReference>
<dbReference type="GO" id="GO:0016567">
    <property type="term" value="P:protein ubiquitination"/>
    <property type="evidence" value="ECO:0007669"/>
    <property type="project" value="UniProtKB-UniPathway"/>
</dbReference>
<dbReference type="CDD" id="cd16664">
    <property type="entry name" value="RING-Ubox_PUB"/>
    <property type="match status" value="1"/>
</dbReference>
<dbReference type="Gene3D" id="1.25.10.10">
    <property type="entry name" value="Leucine-rich Repeat Variant"/>
    <property type="match status" value="1"/>
</dbReference>
<dbReference type="Gene3D" id="3.30.40.10">
    <property type="entry name" value="Zinc/RING finger domain, C3HC4 (zinc finger)"/>
    <property type="match status" value="1"/>
</dbReference>
<dbReference type="InterPro" id="IPR011989">
    <property type="entry name" value="ARM-like"/>
</dbReference>
<dbReference type="InterPro" id="IPR016024">
    <property type="entry name" value="ARM-type_fold"/>
</dbReference>
<dbReference type="InterPro" id="IPR045185">
    <property type="entry name" value="PUB22/23/24-like"/>
</dbReference>
<dbReference type="InterPro" id="IPR045210">
    <property type="entry name" value="RING-Ubox_PUB"/>
</dbReference>
<dbReference type="InterPro" id="IPR003613">
    <property type="entry name" value="Ubox_domain"/>
</dbReference>
<dbReference type="InterPro" id="IPR013083">
    <property type="entry name" value="Znf_RING/FYVE/PHD"/>
</dbReference>
<dbReference type="PANTHER" id="PTHR22849:SF24">
    <property type="entry name" value="E3 UBIQUITIN-PROTEIN LIGASE PUB24"/>
    <property type="match status" value="1"/>
</dbReference>
<dbReference type="PANTHER" id="PTHR22849">
    <property type="entry name" value="WDSAM1 PROTEIN"/>
    <property type="match status" value="1"/>
</dbReference>
<dbReference type="Pfam" id="PF04564">
    <property type="entry name" value="U-box"/>
    <property type="match status" value="1"/>
</dbReference>
<dbReference type="SMART" id="SM00504">
    <property type="entry name" value="Ubox"/>
    <property type="match status" value="1"/>
</dbReference>
<dbReference type="SUPFAM" id="SSF48371">
    <property type="entry name" value="ARM repeat"/>
    <property type="match status" value="1"/>
</dbReference>
<dbReference type="SUPFAM" id="SSF57850">
    <property type="entry name" value="RING/U-box"/>
    <property type="match status" value="1"/>
</dbReference>
<dbReference type="PROSITE" id="PS51698">
    <property type="entry name" value="U_BOX"/>
    <property type="match status" value="1"/>
</dbReference>
<comment type="function">
    <text evidence="1">E3 ubiquitin-protein ligase that acts as a negative regulator of the immunity triggered by the pathogen-associated molecular patterns (PAMPs), in association with PUB22 and PUB23.</text>
</comment>
<comment type="catalytic activity">
    <reaction>
        <text>S-ubiquitinyl-[E2 ubiquitin-conjugating enzyme]-L-cysteine + [acceptor protein]-L-lysine = [E2 ubiquitin-conjugating enzyme]-L-cysteine + N(6)-ubiquitinyl-[acceptor protein]-L-lysine.</text>
        <dbReference type="EC" id="2.3.2.27"/>
    </reaction>
</comment>
<comment type="pathway">
    <text>Protein modification; protein ubiquitination.</text>
</comment>
<comment type="induction">
    <text evidence="1">By the bacterial elicitor flg22, and bacterial and oomycete pathogens.</text>
</comment>
<comment type="PTM">
    <text evidence="1">Auto-ubiquitinated.</text>
</comment>
<comment type="sequence caution" evidence="2">
    <conflict type="erroneous initiation">
        <sequence resource="EMBL-CDS" id="BAH19773"/>
    </conflict>
    <text>Extended N-terminus.</text>
</comment>
<keyword id="KW-0611">Plant defense</keyword>
<keyword id="KW-1185">Reference proteome</keyword>
<keyword id="KW-0677">Repeat</keyword>
<keyword id="KW-0808">Transferase</keyword>
<keyword id="KW-0832">Ubl conjugation</keyword>
<keyword id="KW-0833">Ubl conjugation pathway</keyword>
<sequence length="456" mass="51287">MDQEEEEIEIPNYFICPISLEIMKDPVTTVSGITYDRQNIVKWLEKVPSCPVTKQPLPLDSDLTPNHMLRRLIQHWCVENETRGVVRISTPRVPPGKLNVVEEIKNLKKFGQEALGREETLQKLEVLAMDGNNRRLMCECGVHKSLILFVVKCTSEDEDGRRRIKGLDESLRLLHLIGIPSNDAKTILMENDRVMESLTWVLHQEDFLSKAYTIVLLRNLTEYTSSHIVERLNPEIFKGIIGFLKDVVNSVNRTSPTVRETVQSSSRPSLGKTEPSKLDHSLVIKQAVTAALMILLETSSWSRNRSLLVDLGAVSELIELEISYTGEKRITELMLGVLSRLCCCANGRAEILAHRGGIAVVTKRLLRVSPAADDRAISILTTVSKFSPENMVVEEMVNVGTVEKLCSVLGMDCGLNLKEKAKEILKDHFDEWKKFPCIDITLLTKLLSISPKGPKI</sequence>
<feature type="chain" id="PRO_0000322168" description="E3 ubiquitin-protein ligase PUB24">
    <location>
        <begin position="1"/>
        <end position="456"/>
    </location>
</feature>
<feature type="domain" description="U-box">
    <location>
        <begin position="9"/>
        <end position="83"/>
    </location>
</feature>
<feature type="mutagenesis site" description="Loss of autoubiquitination." evidence="1">
    <original>C</original>
    <variation>A</variation>
    <location>
        <position position="16"/>
    </location>
</feature>
<feature type="mutagenesis site" description="Loss of autoubiquitination." evidence="1">
    <original>W</original>
    <variation>A</variation>
    <location>
        <position position="43"/>
    </location>
</feature>
<gene>
    <name type="primary">PUB24</name>
    <name type="ordered locus">At3g11840</name>
    <name type="ORF">F26K24.13</name>
</gene>
<name>PUB24_ARATH</name>
<organism>
    <name type="scientific">Arabidopsis thaliana</name>
    <name type="common">Mouse-ear cress</name>
    <dbReference type="NCBI Taxonomy" id="3702"/>
    <lineage>
        <taxon>Eukaryota</taxon>
        <taxon>Viridiplantae</taxon>
        <taxon>Streptophyta</taxon>
        <taxon>Embryophyta</taxon>
        <taxon>Tracheophyta</taxon>
        <taxon>Spermatophyta</taxon>
        <taxon>Magnoliopsida</taxon>
        <taxon>eudicotyledons</taxon>
        <taxon>Gunneridae</taxon>
        <taxon>Pentapetalae</taxon>
        <taxon>rosids</taxon>
        <taxon>malvids</taxon>
        <taxon>Brassicales</taxon>
        <taxon>Brassicaceae</taxon>
        <taxon>Camelineae</taxon>
        <taxon>Arabidopsis</taxon>
    </lineage>
</organism>
<evidence type="ECO:0000269" key="1">
    <source>
    </source>
</evidence>
<evidence type="ECO:0000305" key="2"/>